<feature type="chain" id="PRO_1000202334" description="2-dehydro-3-deoxyphosphooctonate aldolase">
    <location>
        <begin position="1"/>
        <end position="273"/>
    </location>
</feature>
<gene>
    <name evidence="1" type="primary">kdsA</name>
    <name type="ordered locus">GM21_2612</name>
</gene>
<name>KDSA_GEOSM</name>
<accession>C6E0M6</accession>
<proteinExistence type="inferred from homology"/>
<keyword id="KW-0963">Cytoplasm</keyword>
<keyword id="KW-0448">Lipopolysaccharide biosynthesis</keyword>
<keyword id="KW-0808">Transferase</keyword>
<protein>
    <recommendedName>
        <fullName evidence="1">2-dehydro-3-deoxyphosphooctonate aldolase</fullName>
        <ecNumber evidence="1">2.5.1.55</ecNumber>
    </recommendedName>
    <alternativeName>
        <fullName evidence="1">3-deoxy-D-manno-octulosonic acid 8-phosphate synthase</fullName>
    </alternativeName>
    <alternativeName>
        <fullName evidence="1">KDO-8-phosphate synthase</fullName>
        <shortName evidence="1">KDO 8-P synthase</shortName>
        <shortName evidence="1">KDOPS</shortName>
    </alternativeName>
    <alternativeName>
        <fullName evidence="1">Phospho-2-dehydro-3-deoxyoctonate aldolase</fullName>
    </alternativeName>
</protein>
<evidence type="ECO:0000255" key="1">
    <source>
        <dbReference type="HAMAP-Rule" id="MF_00056"/>
    </source>
</evidence>
<sequence length="273" mass="29144">MTREITVGGVKIGGGRPLALVAGPCVIENETATLRCAERLMSICNGVGISLIFKASYDKANRTSVTAFRGPGMKEGLRILAKVKEALGVPVLSDIHSIEQVEPAADVLDVLQIPAFLCRQTDLLVAAANTGKVINVKKGQFLAPWDMKNVVGKISSCGNENIILTERGASFGYNNLVVDMRSFPIMRSTGYPVIFDATHSVQLPGGEGTSSGGQREYVEFLSRAAVAAGVDGIFMEVHEEPEQALCDGPNSVRLDDMPALLKKLKSIDAIVNQ</sequence>
<comment type="catalytic activity">
    <reaction evidence="1">
        <text>D-arabinose 5-phosphate + phosphoenolpyruvate + H2O = 3-deoxy-alpha-D-manno-2-octulosonate-8-phosphate + phosphate</text>
        <dbReference type="Rhea" id="RHEA:14053"/>
        <dbReference type="ChEBI" id="CHEBI:15377"/>
        <dbReference type="ChEBI" id="CHEBI:43474"/>
        <dbReference type="ChEBI" id="CHEBI:57693"/>
        <dbReference type="ChEBI" id="CHEBI:58702"/>
        <dbReference type="ChEBI" id="CHEBI:85985"/>
        <dbReference type="EC" id="2.5.1.55"/>
    </reaction>
</comment>
<comment type="pathway">
    <text evidence="1">Carbohydrate biosynthesis; 3-deoxy-D-manno-octulosonate biosynthesis; 3-deoxy-D-manno-octulosonate from D-ribulose 5-phosphate: step 2/3.</text>
</comment>
<comment type="pathway">
    <text evidence="1">Bacterial outer membrane biogenesis; lipopolysaccharide biosynthesis.</text>
</comment>
<comment type="subcellular location">
    <subcellularLocation>
        <location evidence="1">Cytoplasm</location>
    </subcellularLocation>
</comment>
<comment type="similarity">
    <text evidence="1">Belongs to the KdsA family.</text>
</comment>
<reference key="1">
    <citation type="submission" date="2009-07" db="EMBL/GenBank/DDBJ databases">
        <title>Complete sequence of Geobacter sp. M21.</title>
        <authorList>
            <consortium name="US DOE Joint Genome Institute"/>
            <person name="Lucas S."/>
            <person name="Copeland A."/>
            <person name="Lapidus A."/>
            <person name="Glavina del Rio T."/>
            <person name="Dalin E."/>
            <person name="Tice H."/>
            <person name="Bruce D."/>
            <person name="Goodwin L."/>
            <person name="Pitluck S."/>
            <person name="Saunders E."/>
            <person name="Brettin T."/>
            <person name="Detter J.C."/>
            <person name="Han C."/>
            <person name="Larimer F."/>
            <person name="Land M."/>
            <person name="Hauser L."/>
            <person name="Kyrpides N."/>
            <person name="Ovchinnikova G."/>
            <person name="Lovley D."/>
        </authorList>
    </citation>
    <scope>NUCLEOTIDE SEQUENCE [LARGE SCALE GENOMIC DNA]</scope>
    <source>
        <strain>M21</strain>
    </source>
</reference>
<organism>
    <name type="scientific">Geobacter sp. (strain M21)</name>
    <dbReference type="NCBI Taxonomy" id="443144"/>
    <lineage>
        <taxon>Bacteria</taxon>
        <taxon>Pseudomonadati</taxon>
        <taxon>Thermodesulfobacteriota</taxon>
        <taxon>Desulfuromonadia</taxon>
        <taxon>Geobacterales</taxon>
        <taxon>Geobacteraceae</taxon>
        <taxon>Geobacter</taxon>
    </lineage>
</organism>
<dbReference type="EC" id="2.5.1.55" evidence="1"/>
<dbReference type="EMBL" id="CP001661">
    <property type="protein sequence ID" value="ACT18650.1"/>
    <property type="molecule type" value="Genomic_DNA"/>
</dbReference>
<dbReference type="SMR" id="C6E0M6"/>
<dbReference type="STRING" id="443144.GM21_2612"/>
<dbReference type="KEGG" id="gem:GM21_2612"/>
<dbReference type="eggNOG" id="COG2877">
    <property type="taxonomic scope" value="Bacteria"/>
</dbReference>
<dbReference type="HOGENOM" id="CLU_036666_0_0_7"/>
<dbReference type="OrthoDB" id="9802281at2"/>
<dbReference type="UniPathway" id="UPA00030"/>
<dbReference type="UniPathway" id="UPA00357">
    <property type="reaction ID" value="UER00474"/>
</dbReference>
<dbReference type="GO" id="GO:0005737">
    <property type="term" value="C:cytoplasm"/>
    <property type="evidence" value="ECO:0007669"/>
    <property type="project" value="UniProtKB-SubCell"/>
</dbReference>
<dbReference type="GO" id="GO:0008676">
    <property type="term" value="F:3-deoxy-8-phosphooctulonate synthase activity"/>
    <property type="evidence" value="ECO:0007669"/>
    <property type="project" value="UniProtKB-UniRule"/>
</dbReference>
<dbReference type="GO" id="GO:0019294">
    <property type="term" value="P:keto-3-deoxy-D-manno-octulosonic acid biosynthetic process"/>
    <property type="evidence" value="ECO:0007669"/>
    <property type="project" value="UniProtKB-UniRule"/>
</dbReference>
<dbReference type="Gene3D" id="3.20.20.70">
    <property type="entry name" value="Aldolase class I"/>
    <property type="match status" value="1"/>
</dbReference>
<dbReference type="HAMAP" id="MF_00056">
    <property type="entry name" value="KDO8P_synth"/>
    <property type="match status" value="1"/>
</dbReference>
<dbReference type="InterPro" id="IPR013785">
    <property type="entry name" value="Aldolase_TIM"/>
</dbReference>
<dbReference type="InterPro" id="IPR006218">
    <property type="entry name" value="DAHP1/KDSA"/>
</dbReference>
<dbReference type="InterPro" id="IPR006269">
    <property type="entry name" value="KDO8P_synthase"/>
</dbReference>
<dbReference type="NCBIfam" id="TIGR01362">
    <property type="entry name" value="KDO8P_synth"/>
    <property type="match status" value="1"/>
</dbReference>
<dbReference type="NCBIfam" id="NF003543">
    <property type="entry name" value="PRK05198.1"/>
    <property type="match status" value="1"/>
</dbReference>
<dbReference type="PANTHER" id="PTHR21057">
    <property type="entry name" value="PHOSPHO-2-DEHYDRO-3-DEOXYHEPTONATE ALDOLASE"/>
    <property type="match status" value="1"/>
</dbReference>
<dbReference type="Pfam" id="PF00793">
    <property type="entry name" value="DAHP_synth_1"/>
    <property type="match status" value="1"/>
</dbReference>
<dbReference type="SUPFAM" id="SSF51569">
    <property type="entry name" value="Aldolase"/>
    <property type="match status" value="1"/>
</dbReference>